<feature type="chain" id="PRO_0000104962" description="DNA-binding protein HRm">
    <location>
        <begin position="1"/>
        <end position="90"/>
    </location>
</feature>
<feature type="sequence conflict" description="In Ref. 1; AA sequence." evidence="1" ref="1">
    <location>
        <position position="55"/>
    </location>
</feature>
<feature type="sequence conflict" description="In Ref. 1; AA sequence." evidence="1" ref="1">
    <original>R</original>
    <variation>RR</variation>
    <location>
        <position position="61"/>
    </location>
</feature>
<reference key="1">
    <citation type="journal article" date="1983" name="Eur. J. Biochem.">
        <title>Primary structure of the DNA-binding protein HRm from Rhizobium meliloti.</title>
        <authorList>
            <person name="Laine B."/>
            <person name="Belaiche D."/>
            <person name="Khanaka H."/>
            <person name="Sautiere P."/>
        </authorList>
    </citation>
    <scope>PROTEIN SEQUENCE</scope>
</reference>
<reference key="2">
    <citation type="journal article" date="2000" name="J. Bacteriol.">
        <title>The Sinorhizobium meliloti lon protease is involved in regulating exopolysaccharide synthesis and is required for nodulation of alfalfa.</title>
        <authorList>
            <person name="Summers M.L."/>
            <person name="Botero L.M."/>
            <person name="Busse S.C."/>
            <person name="McDermott T.R."/>
        </authorList>
    </citation>
    <scope>NUCLEOTIDE SEQUENCE [GENOMIC DNA]</scope>
</reference>
<reference key="3">
    <citation type="journal article" date="2001" name="Proc. Natl. Acad. Sci. U.S.A.">
        <title>Analysis of the chromosome sequence of the legume symbiont Sinorhizobium meliloti strain 1021.</title>
        <authorList>
            <person name="Capela D."/>
            <person name="Barloy-Hubler F."/>
            <person name="Gouzy J."/>
            <person name="Bothe G."/>
            <person name="Ampe F."/>
            <person name="Batut J."/>
            <person name="Boistard P."/>
            <person name="Becker A."/>
            <person name="Boutry M."/>
            <person name="Cadieu E."/>
            <person name="Dreano S."/>
            <person name="Gloux S."/>
            <person name="Godrie T."/>
            <person name="Goffeau A."/>
            <person name="Kahn D."/>
            <person name="Kiss E."/>
            <person name="Lelaure V."/>
            <person name="Masuy D."/>
            <person name="Pohl T."/>
            <person name="Portetelle D."/>
            <person name="Puehler A."/>
            <person name="Purnelle B."/>
            <person name="Ramsperger U."/>
            <person name="Renard C."/>
            <person name="Thebault P."/>
            <person name="Vandenbol M."/>
            <person name="Weidner S."/>
            <person name="Galibert F."/>
        </authorList>
    </citation>
    <scope>NUCLEOTIDE SEQUENCE [LARGE SCALE GENOMIC DNA]</scope>
    <source>
        <strain>1021</strain>
    </source>
</reference>
<reference key="4">
    <citation type="journal article" date="2001" name="Science">
        <title>The composite genome of the legume symbiont Sinorhizobium meliloti.</title>
        <authorList>
            <person name="Galibert F."/>
            <person name="Finan T.M."/>
            <person name="Long S.R."/>
            <person name="Puehler A."/>
            <person name="Abola P."/>
            <person name="Ampe F."/>
            <person name="Barloy-Hubler F."/>
            <person name="Barnett M.J."/>
            <person name="Becker A."/>
            <person name="Boistard P."/>
            <person name="Bothe G."/>
            <person name="Boutry M."/>
            <person name="Bowser L."/>
            <person name="Buhrmester J."/>
            <person name="Cadieu E."/>
            <person name="Capela D."/>
            <person name="Chain P."/>
            <person name="Cowie A."/>
            <person name="Davis R.W."/>
            <person name="Dreano S."/>
            <person name="Federspiel N.A."/>
            <person name="Fisher R.F."/>
            <person name="Gloux S."/>
            <person name="Godrie T."/>
            <person name="Goffeau A."/>
            <person name="Golding B."/>
            <person name="Gouzy J."/>
            <person name="Gurjal M."/>
            <person name="Hernandez-Lucas I."/>
            <person name="Hong A."/>
            <person name="Huizar L."/>
            <person name="Hyman R.W."/>
            <person name="Jones T."/>
            <person name="Kahn D."/>
            <person name="Kahn M.L."/>
            <person name="Kalman S."/>
            <person name="Keating D.H."/>
            <person name="Kiss E."/>
            <person name="Komp C."/>
            <person name="Lelaure V."/>
            <person name="Masuy D."/>
            <person name="Palm C."/>
            <person name="Peck M.C."/>
            <person name="Pohl T.M."/>
            <person name="Portetelle D."/>
            <person name="Purnelle B."/>
            <person name="Ramsperger U."/>
            <person name="Surzycki R."/>
            <person name="Thebault P."/>
            <person name="Vandenbol M."/>
            <person name="Vorhoelter F.J."/>
            <person name="Weidner S."/>
            <person name="Wells D.H."/>
            <person name="Wong K."/>
            <person name="Yeh K.-C."/>
            <person name="Batut J."/>
        </authorList>
    </citation>
    <scope>NUCLEOTIDE SEQUENCE [LARGE SCALE GENOMIC DNA]</scope>
    <source>
        <strain>1021</strain>
    </source>
</reference>
<reference key="5">
    <citation type="journal article" date="1982" name="Biochem. Biophys. Res. Commun.">
        <title>Characterization and structural study of the DNA-binding protein HRm From Rhizobium meliloti.</title>
        <authorList>
            <person name="Laine B."/>
            <person name="Belaiche D."/>
            <person name="Sautiere P."/>
            <person name="Biserte G."/>
        </authorList>
    </citation>
    <scope>PROTEIN SEQUENCE OF 1-54</scope>
    <source>
        <strain>STR 3</strain>
    </source>
</reference>
<protein>
    <recommendedName>
        <fullName>DNA-binding protein HRm</fullName>
    </recommendedName>
</protein>
<organism>
    <name type="scientific">Rhizobium meliloti (strain 1021)</name>
    <name type="common">Ensifer meliloti</name>
    <name type="synonym">Sinorhizobium meliloti</name>
    <dbReference type="NCBI Taxonomy" id="266834"/>
    <lineage>
        <taxon>Bacteria</taxon>
        <taxon>Pseudomonadati</taxon>
        <taxon>Pseudomonadota</taxon>
        <taxon>Alphaproteobacteria</taxon>
        <taxon>Hyphomicrobiales</taxon>
        <taxon>Rhizobiaceae</taxon>
        <taxon>Sinorhizobium/Ensifer group</taxon>
        <taxon>Sinorhizobium</taxon>
    </lineage>
</organism>
<comment type="function">
    <text>Histone-like DNA-binding protein which is capable of wrapping DNA to stabilize it, and thus to prevent its denaturation under extreme environmental conditions.</text>
</comment>
<comment type="similarity">
    <text evidence="1">Belongs to the bacterial histone-like protein family.</text>
</comment>
<gene>
    <name type="primary">hupB</name>
    <name type="ordered locus">R01258</name>
    <name type="ORF">SMc01906</name>
</gene>
<keyword id="KW-0903">Direct protein sequencing</keyword>
<keyword id="KW-0226">DNA condensation</keyword>
<keyword id="KW-0238">DNA-binding</keyword>
<keyword id="KW-1185">Reference proteome</keyword>
<proteinExistence type="evidence at protein level"/>
<evidence type="ECO:0000305" key="1"/>
<dbReference type="EMBL" id="AF167159">
    <property type="protein sequence ID" value="AAF05301.1"/>
    <property type="molecule type" value="Genomic_DNA"/>
</dbReference>
<dbReference type="EMBL" id="AL591688">
    <property type="protein sequence ID" value="CAC45837.1"/>
    <property type="molecule type" value="Genomic_DNA"/>
</dbReference>
<dbReference type="PIR" id="S00053">
    <property type="entry name" value="DNZRHM"/>
</dbReference>
<dbReference type="RefSeq" id="NP_385364.1">
    <property type="nucleotide sequence ID" value="NC_003047.1"/>
</dbReference>
<dbReference type="RefSeq" id="WP_003531811.1">
    <property type="nucleotide sequence ID" value="NC_003047.1"/>
</dbReference>
<dbReference type="SMR" id="P02344"/>
<dbReference type="EnsemblBacteria" id="CAC45837">
    <property type="protein sequence ID" value="CAC45837"/>
    <property type="gene ID" value="SMc01906"/>
</dbReference>
<dbReference type="GeneID" id="89575578"/>
<dbReference type="KEGG" id="sme:SMc01906"/>
<dbReference type="PATRIC" id="fig|266834.11.peg.2672"/>
<dbReference type="eggNOG" id="COG0776">
    <property type="taxonomic scope" value="Bacteria"/>
</dbReference>
<dbReference type="HOGENOM" id="CLU_105066_3_2_5"/>
<dbReference type="OrthoDB" id="9799835at2"/>
<dbReference type="Proteomes" id="UP000001976">
    <property type="component" value="Chromosome"/>
</dbReference>
<dbReference type="GO" id="GO:0005829">
    <property type="term" value="C:cytosol"/>
    <property type="evidence" value="ECO:0007669"/>
    <property type="project" value="TreeGrafter"/>
</dbReference>
<dbReference type="GO" id="GO:0003677">
    <property type="term" value="F:DNA binding"/>
    <property type="evidence" value="ECO:0007669"/>
    <property type="project" value="UniProtKB-KW"/>
</dbReference>
<dbReference type="GO" id="GO:0030527">
    <property type="term" value="F:structural constituent of chromatin"/>
    <property type="evidence" value="ECO:0007669"/>
    <property type="project" value="InterPro"/>
</dbReference>
<dbReference type="GO" id="GO:0030261">
    <property type="term" value="P:chromosome condensation"/>
    <property type="evidence" value="ECO:0007669"/>
    <property type="project" value="UniProtKB-KW"/>
</dbReference>
<dbReference type="CDD" id="cd13831">
    <property type="entry name" value="HU"/>
    <property type="match status" value="1"/>
</dbReference>
<dbReference type="FunFam" id="4.10.520.10:FF:000001">
    <property type="entry name" value="DNA-binding protein HU"/>
    <property type="match status" value="1"/>
</dbReference>
<dbReference type="Gene3D" id="4.10.520.10">
    <property type="entry name" value="IHF-like DNA-binding proteins"/>
    <property type="match status" value="1"/>
</dbReference>
<dbReference type="InterPro" id="IPR000119">
    <property type="entry name" value="Hist_DNA-bd"/>
</dbReference>
<dbReference type="InterPro" id="IPR020816">
    <property type="entry name" value="Histone-like_DNA-bd_CS"/>
</dbReference>
<dbReference type="InterPro" id="IPR010992">
    <property type="entry name" value="IHF-like_DNA-bd_dom_sf"/>
</dbReference>
<dbReference type="PANTHER" id="PTHR33175">
    <property type="entry name" value="DNA-BINDING PROTEIN HU"/>
    <property type="match status" value="1"/>
</dbReference>
<dbReference type="PANTHER" id="PTHR33175:SF3">
    <property type="entry name" value="DNA-BINDING PROTEIN HU-BETA"/>
    <property type="match status" value="1"/>
</dbReference>
<dbReference type="Pfam" id="PF00216">
    <property type="entry name" value="Bac_DNA_binding"/>
    <property type="match status" value="1"/>
</dbReference>
<dbReference type="PRINTS" id="PR01727">
    <property type="entry name" value="DNABINDINGHU"/>
</dbReference>
<dbReference type="SMART" id="SM00411">
    <property type="entry name" value="BHL"/>
    <property type="match status" value="1"/>
</dbReference>
<dbReference type="SUPFAM" id="SSF47729">
    <property type="entry name" value="IHF-like DNA-binding proteins"/>
    <property type="match status" value="1"/>
</dbReference>
<dbReference type="PROSITE" id="PS00045">
    <property type="entry name" value="HISTONE_LIKE"/>
    <property type="match status" value="1"/>
</dbReference>
<sequence length="90" mass="9303">MNKNELVAAVADKAGLSKADASSAVDAVFETIQGELKNGGDIRLVGFGNFSVSRREASKGRNPSTGAEVDIPARNVPKFTAGKGLKDAVN</sequence>
<accession>P02344</accession>
<name>DBH_RHIME</name>